<sequence>MDSNENKKNGGDSLELNIINNNNDNNNNNDNNNNSTEEHIESVEQSIKEFNNVANELETEFRDYLVETHKNDVNNIKNDIEAPPSGEFEPGGGAEDEDFKLRNYFKQSKVDAIQNGGKLKKMGVSFKNLTVIGKGADQSVVSDLATPFTFLISKLNVKNWFKKSKPSTFDILHDVSGFCKDGEMLLVLGRPGSGCSSLLRTISNQTGSYVDVLGSVTYGGIDQKKWDKYKAECIYVPEEDTHYPTLTVRETLEFALKCKTPSNRLPNEKKRTFRSKIFNLLLGMFGMVHQAETMVGNEFVRGLSGGERKRITIAESMVSASSINCYDCSTRGLDAASALDYAKSIRIMSDTLHKTTIASFYQASDSIYNLFDRVLILEKGRCVYFGPVGLAKQYFIDMGFECEPRKSTPDFLTGVTNPQERKVRPGFTVPESSAEFEEAWKQSEIYAQSCQEQREYEKLIEIEQPSIDFIQEITEQKSKSTSKSSPYTTGFFVQVIALTIRNFQIIWGDKFSLISRYSSVLVQAPIYGSVFFAMSNSIDGAFTRGGAIFSSILFNALLSEQELSITFTGRRILQKHKTYAMYRPAALHFAQIITEIPIIMIQVFLFSIVTYFMFGLDSSGSKFFINCFTLIGFTLATNNLYRLAGNLTPSVYIGQNIMNVLFLTMMTFTSYIIPYHQMPVWFGWYHYCNPFSFAFRALMGNEFNGLKFDCIEDAIPKGEFYQNETFTPYRSCATTAAEPGQLYFTGERYLEKSFGWEIKPSTQGFIAYNICIVYGFWILFIICNCIVLNIIDWTSGGFTCKVYLKGKAPKMNDVENEKQQNLLVQQATNNMKESLSMPGGLFTWQHMYYSVPIGGNTMKLLLDDIQGWIKPGQMTALMGSSGAGKTTLLDVLAKRKTTGQVQGTTLLNGKPLEIDFERITGYVEQMDVLNPALTVRETLRFSAKLRGEPTISLEEKFKYVEQVLEMMEMKHLGDALIGDLETGVGISVEERKRTTIGVELVAKPHILFLDEPTSGLDAQSSYNIIKFIRKLADAGMPLVCTIHQPSSVLFEHFDRILLLAKGGKTVYFGDIGEKSKTLTSYFQRHGVRECSDSENPAEYILEACGAGRHGKSVVDWPQAWKESPEYQSICQELKELQVTGSSYASIHVDNGKPREYATSLTYQTIEVYKRLNLIWWRSPGYSYGTFIQSALVGLINGWTFYNLQDSANDMNQRIFFIFNVTMLGILLMFLVLPQFITQQDYFKRDYASKFYHWLPFALSIIVVELPFVLVSGTIFFFCSFWTAGLNSDASTNFFFWLIFMLFLFYCVGFGQAIGAVCINITVALNLLPVLIIFLFLFCGVLVIPDQIPHFWKWVYHLNPCTHFLEAMVTNVLKHVNVVCTTDDLIKFVKPSSFSTCSDYAFEFLNGSNHSVSGSVQSLGGDNCGYCLYKNGEEYYSKLGWSYDNRWRGFGIIAGYFVLNIFLVVLFVFLTRKGKR</sequence>
<proteinExistence type="inferred from homology"/>
<keyword id="KW-0067">ATP-binding</keyword>
<keyword id="KW-0175">Coiled coil</keyword>
<keyword id="KW-0472">Membrane</keyword>
<keyword id="KW-0547">Nucleotide-binding</keyword>
<keyword id="KW-1185">Reference proteome</keyword>
<keyword id="KW-0677">Repeat</keyword>
<keyword id="KW-0812">Transmembrane</keyword>
<keyword id="KW-1133">Transmembrane helix</keyword>
<keyword id="KW-0813">Transport</keyword>
<accession>Q55GB1</accession>
<accession>Q8T678</accession>
<gene>
    <name type="primary">abcG15</name>
    <name type="ORF">DDB_G0267432</name>
</gene>
<comment type="subcellular location">
    <subcellularLocation>
        <location evidence="4">Membrane</location>
        <topology evidence="4">Multi-pass membrane protein</topology>
    </subcellularLocation>
</comment>
<comment type="similarity">
    <text evidence="4">Belongs to the ABC transporter superfamily. ABCG family. PDR (TC 3.A.1.205) subfamily.</text>
</comment>
<name>ABCGF_DICDI</name>
<dbReference type="EMBL" id="AF482393">
    <property type="protein sequence ID" value="AAL91500.1"/>
    <property type="molecule type" value="Genomic_DNA"/>
</dbReference>
<dbReference type="EMBL" id="AAFI02000003">
    <property type="protein sequence ID" value="EAL73168.1"/>
    <property type="molecule type" value="Genomic_DNA"/>
</dbReference>
<dbReference type="RefSeq" id="XP_647273.1">
    <property type="nucleotide sequence ID" value="XM_642181.1"/>
</dbReference>
<dbReference type="SMR" id="Q55GB1"/>
<dbReference type="FunCoup" id="Q55GB1">
    <property type="interactions" value="7"/>
</dbReference>
<dbReference type="STRING" id="44689.Q55GB1"/>
<dbReference type="PaxDb" id="44689-DDB0191235"/>
<dbReference type="EnsemblProtists" id="EAL73168">
    <property type="protein sequence ID" value="EAL73168"/>
    <property type="gene ID" value="DDB_G0267432"/>
</dbReference>
<dbReference type="GeneID" id="8616080"/>
<dbReference type="KEGG" id="ddi:DDB_G0267432"/>
<dbReference type="dictyBase" id="DDB_G0267432">
    <property type="gene designation" value="abcG15"/>
</dbReference>
<dbReference type="VEuPathDB" id="AmoebaDB:DDB_G0267432"/>
<dbReference type="eggNOG" id="KOG0065">
    <property type="taxonomic scope" value="Eukaryota"/>
</dbReference>
<dbReference type="HOGENOM" id="CLU_000604_35_0_1"/>
<dbReference type="InParanoid" id="Q55GB1"/>
<dbReference type="OMA" id="PYCFLAT"/>
<dbReference type="PhylomeDB" id="Q55GB1"/>
<dbReference type="PRO" id="PR:Q55GB1"/>
<dbReference type="Proteomes" id="UP000002195">
    <property type="component" value="Chromosome 1"/>
</dbReference>
<dbReference type="GO" id="GO:0016020">
    <property type="term" value="C:membrane"/>
    <property type="evidence" value="ECO:0007669"/>
    <property type="project" value="UniProtKB-SubCell"/>
</dbReference>
<dbReference type="GO" id="GO:0140359">
    <property type="term" value="F:ABC-type transporter activity"/>
    <property type="evidence" value="ECO:0007669"/>
    <property type="project" value="InterPro"/>
</dbReference>
<dbReference type="GO" id="GO:0005524">
    <property type="term" value="F:ATP binding"/>
    <property type="evidence" value="ECO:0007669"/>
    <property type="project" value="UniProtKB-KW"/>
</dbReference>
<dbReference type="GO" id="GO:0016887">
    <property type="term" value="F:ATP hydrolysis activity"/>
    <property type="evidence" value="ECO:0007669"/>
    <property type="project" value="InterPro"/>
</dbReference>
<dbReference type="GO" id="GO:0031152">
    <property type="term" value="P:aggregation involved in sorocarp development"/>
    <property type="evidence" value="ECO:0000318"/>
    <property type="project" value="GO_Central"/>
</dbReference>
<dbReference type="GO" id="GO:0031288">
    <property type="term" value="P:sorocarp morphogenesis"/>
    <property type="evidence" value="ECO:0000315"/>
    <property type="project" value="dictyBase"/>
</dbReference>
<dbReference type="CDD" id="cd03233">
    <property type="entry name" value="ABCG_PDR_domain1"/>
    <property type="match status" value="1"/>
</dbReference>
<dbReference type="CDD" id="cd03232">
    <property type="entry name" value="ABCG_PDR_domain2"/>
    <property type="match status" value="1"/>
</dbReference>
<dbReference type="FunFam" id="3.40.50.300:FF:000054">
    <property type="entry name" value="ABC multidrug transporter atrF"/>
    <property type="match status" value="1"/>
</dbReference>
<dbReference type="FunFam" id="3.40.50.300:FF:002175">
    <property type="entry name" value="ABC transporter G family member 9"/>
    <property type="match status" value="1"/>
</dbReference>
<dbReference type="Gene3D" id="3.40.50.300">
    <property type="entry name" value="P-loop containing nucleotide triphosphate hydrolases"/>
    <property type="match status" value="2"/>
</dbReference>
<dbReference type="InterPro" id="IPR003593">
    <property type="entry name" value="AAA+_ATPase"/>
</dbReference>
<dbReference type="InterPro" id="IPR013525">
    <property type="entry name" value="ABC2_TM"/>
</dbReference>
<dbReference type="InterPro" id="IPR029481">
    <property type="entry name" value="ABC_trans_N"/>
</dbReference>
<dbReference type="InterPro" id="IPR003439">
    <property type="entry name" value="ABC_transporter-like_ATP-bd"/>
</dbReference>
<dbReference type="InterPro" id="IPR017871">
    <property type="entry name" value="ABC_transporter-like_CS"/>
</dbReference>
<dbReference type="InterPro" id="IPR043926">
    <property type="entry name" value="ABCG_dom"/>
</dbReference>
<dbReference type="InterPro" id="IPR034001">
    <property type="entry name" value="ABCG_PDR_1"/>
</dbReference>
<dbReference type="InterPro" id="IPR034003">
    <property type="entry name" value="ABCG_PDR_2"/>
</dbReference>
<dbReference type="InterPro" id="IPR027417">
    <property type="entry name" value="P-loop_NTPase"/>
</dbReference>
<dbReference type="InterPro" id="IPR010929">
    <property type="entry name" value="PDR_CDR_ABC"/>
</dbReference>
<dbReference type="PANTHER" id="PTHR19241">
    <property type="entry name" value="ATP-BINDING CASSETTE TRANSPORTER"/>
    <property type="match status" value="1"/>
</dbReference>
<dbReference type="Pfam" id="PF01061">
    <property type="entry name" value="ABC2_membrane"/>
    <property type="match status" value="2"/>
</dbReference>
<dbReference type="Pfam" id="PF19055">
    <property type="entry name" value="ABC2_membrane_7"/>
    <property type="match status" value="1"/>
</dbReference>
<dbReference type="Pfam" id="PF00005">
    <property type="entry name" value="ABC_tran"/>
    <property type="match status" value="2"/>
</dbReference>
<dbReference type="Pfam" id="PF14510">
    <property type="entry name" value="ABC_trans_N"/>
    <property type="match status" value="1"/>
</dbReference>
<dbReference type="Pfam" id="PF06422">
    <property type="entry name" value="PDR_CDR"/>
    <property type="match status" value="1"/>
</dbReference>
<dbReference type="SMART" id="SM00382">
    <property type="entry name" value="AAA"/>
    <property type="match status" value="2"/>
</dbReference>
<dbReference type="SUPFAM" id="SSF52540">
    <property type="entry name" value="P-loop containing nucleoside triphosphate hydrolases"/>
    <property type="match status" value="2"/>
</dbReference>
<dbReference type="PROSITE" id="PS00211">
    <property type="entry name" value="ABC_TRANSPORTER_1"/>
    <property type="match status" value="1"/>
</dbReference>
<dbReference type="PROSITE" id="PS50893">
    <property type="entry name" value="ABC_TRANSPORTER_2"/>
    <property type="match status" value="2"/>
</dbReference>
<reference key="1">
    <citation type="journal article" date="2002" name="Eukaryot. Cell">
        <title>Evolutionary analyses of ABC transporters of Dictyostelium discoideum.</title>
        <authorList>
            <person name="Anjard C."/>
            <person name="Loomis W.F."/>
        </authorList>
    </citation>
    <scope>NUCLEOTIDE SEQUENCE [GENOMIC DNA]</scope>
    <scope>NOMENCLATURE</scope>
    <source>
        <strain>AX4</strain>
    </source>
</reference>
<reference key="2">
    <citation type="journal article" date="2005" name="Nature">
        <title>The genome of the social amoeba Dictyostelium discoideum.</title>
        <authorList>
            <person name="Eichinger L."/>
            <person name="Pachebat J.A."/>
            <person name="Gloeckner G."/>
            <person name="Rajandream M.A."/>
            <person name="Sucgang R."/>
            <person name="Berriman M."/>
            <person name="Song J."/>
            <person name="Olsen R."/>
            <person name="Szafranski K."/>
            <person name="Xu Q."/>
            <person name="Tunggal B."/>
            <person name="Kummerfeld S."/>
            <person name="Madera M."/>
            <person name="Konfortov B.A."/>
            <person name="Rivero F."/>
            <person name="Bankier A.T."/>
            <person name="Lehmann R."/>
            <person name="Hamlin N."/>
            <person name="Davies R."/>
            <person name="Gaudet P."/>
            <person name="Fey P."/>
            <person name="Pilcher K."/>
            <person name="Chen G."/>
            <person name="Saunders D."/>
            <person name="Sodergren E.J."/>
            <person name="Davis P."/>
            <person name="Kerhornou A."/>
            <person name="Nie X."/>
            <person name="Hall N."/>
            <person name="Anjard C."/>
            <person name="Hemphill L."/>
            <person name="Bason N."/>
            <person name="Farbrother P."/>
            <person name="Desany B."/>
            <person name="Just E."/>
            <person name="Morio T."/>
            <person name="Rost R."/>
            <person name="Churcher C.M."/>
            <person name="Cooper J."/>
            <person name="Haydock S."/>
            <person name="van Driessche N."/>
            <person name="Cronin A."/>
            <person name="Goodhead I."/>
            <person name="Muzny D.M."/>
            <person name="Mourier T."/>
            <person name="Pain A."/>
            <person name="Lu M."/>
            <person name="Harper D."/>
            <person name="Lindsay R."/>
            <person name="Hauser H."/>
            <person name="James K.D."/>
            <person name="Quiles M."/>
            <person name="Madan Babu M."/>
            <person name="Saito T."/>
            <person name="Buchrieser C."/>
            <person name="Wardroper A."/>
            <person name="Felder M."/>
            <person name="Thangavelu M."/>
            <person name="Johnson D."/>
            <person name="Knights A."/>
            <person name="Loulseged H."/>
            <person name="Mungall K.L."/>
            <person name="Oliver K."/>
            <person name="Price C."/>
            <person name="Quail M.A."/>
            <person name="Urushihara H."/>
            <person name="Hernandez J."/>
            <person name="Rabbinowitsch E."/>
            <person name="Steffen D."/>
            <person name="Sanders M."/>
            <person name="Ma J."/>
            <person name="Kohara Y."/>
            <person name="Sharp S."/>
            <person name="Simmonds M.N."/>
            <person name="Spiegler S."/>
            <person name="Tivey A."/>
            <person name="Sugano S."/>
            <person name="White B."/>
            <person name="Walker D."/>
            <person name="Woodward J.R."/>
            <person name="Winckler T."/>
            <person name="Tanaka Y."/>
            <person name="Shaulsky G."/>
            <person name="Schleicher M."/>
            <person name="Weinstock G.M."/>
            <person name="Rosenthal A."/>
            <person name="Cox E.C."/>
            <person name="Chisholm R.L."/>
            <person name="Gibbs R.A."/>
            <person name="Loomis W.F."/>
            <person name="Platzer M."/>
            <person name="Kay R.R."/>
            <person name="Williams J.G."/>
            <person name="Dear P.H."/>
            <person name="Noegel A.A."/>
            <person name="Barrell B.G."/>
            <person name="Kuspa A."/>
        </authorList>
    </citation>
    <scope>NUCLEOTIDE SEQUENCE [LARGE SCALE GENOMIC DNA]</scope>
    <source>
        <strain>AX4</strain>
    </source>
</reference>
<evidence type="ECO:0000255" key="1"/>
<evidence type="ECO:0000255" key="2">
    <source>
        <dbReference type="PROSITE-ProRule" id="PRU00434"/>
    </source>
</evidence>
<evidence type="ECO:0000256" key="3">
    <source>
        <dbReference type="SAM" id="MobiDB-lite"/>
    </source>
</evidence>
<evidence type="ECO:0000305" key="4"/>
<organism>
    <name type="scientific">Dictyostelium discoideum</name>
    <name type="common">Social amoeba</name>
    <dbReference type="NCBI Taxonomy" id="44689"/>
    <lineage>
        <taxon>Eukaryota</taxon>
        <taxon>Amoebozoa</taxon>
        <taxon>Evosea</taxon>
        <taxon>Eumycetozoa</taxon>
        <taxon>Dictyostelia</taxon>
        <taxon>Dictyosteliales</taxon>
        <taxon>Dictyosteliaceae</taxon>
        <taxon>Dictyostelium</taxon>
    </lineage>
</organism>
<protein>
    <recommendedName>
        <fullName>ABC transporter G family member 15</fullName>
    </recommendedName>
    <alternativeName>
        <fullName>ABC transporter ABCG.15</fullName>
    </alternativeName>
</protein>
<feature type="chain" id="PRO_0000391401" description="ABC transporter G family member 15">
    <location>
        <begin position="1"/>
        <end position="1475"/>
    </location>
</feature>
<feature type="transmembrane region" description="Helical" evidence="1">
    <location>
        <begin position="596"/>
        <end position="616"/>
    </location>
</feature>
<feature type="transmembrane region" description="Helical" evidence="1">
    <location>
        <begin position="623"/>
        <end position="641"/>
    </location>
</feature>
<feature type="transmembrane region" description="Helical" evidence="1">
    <location>
        <begin position="653"/>
        <end position="673"/>
    </location>
</feature>
<feature type="transmembrane region" description="Helical" evidence="1">
    <location>
        <begin position="680"/>
        <end position="699"/>
    </location>
</feature>
<feature type="transmembrane region" description="Helical" evidence="1">
    <location>
        <begin position="770"/>
        <end position="790"/>
    </location>
</feature>
<feature type="transmembrane region" description="Helical" evidence="1">
    <location>
        <begin position="1180"/>
        <end position="1200"/>
    </location>
</feature>
<feature type="transmembrane region" description="Helical" evidence="1">
    <location>
        <begin position="1216"/>
        <end position="1236"/>
    </location>
</feature>
<feature type="transmembrane region" description="Helical" evidence="1">
    <location>
        <begin position="1256"/>
        <end position="1276"/>
    </location>
</feature>
<feature type="transmembrane region" description="Helical" evidence="1">
    <location>
        <begin position="1293"/>
        <end position="1313"/>
    </location>
</feature>
<feature type="transmembrane region" description="Helical" evidence="1">
    <location>
        <begin position="1323"/>
        <end position="1343"/>
    </location>
</feature>
<feature type="transmembrane region" description="Helical" evidence="1">
    <location>
        <begin position="1449"/>
        <end position="1469"/>
    </location>
</feature>
<feature type="domain" description="ABC transporter 1" evidence="2">
    <location>
        <begin position="155"/>
        <end position="404"/>
    </location>
</feature>
<feature type="domain" description="ABC transmembrane type-2 1">
    <location>
        <begin position="507"/>
        <end position="753"/>
    </location>
</feature>
<feature type="domain" description="ABC transporter 2" evidence="2">
    <location>
        <begin position="842"/>
        <end position="1087"/>
    </location>
</feature>
<feature type="domain" description="ABC transmembrane type-2 2">
    <location>
        <begin position="1180"/>
        <end position="1404"/>
    </location>
</feature>
<feature type="region of interest" description="Disordered" evidence="3">
    <location>
        <begin position="1"/>
        <end position="40"/>
    </location>
</feature>
<feature type="region of interest" description="Disordered" evidence="3">
    <location>
        <begin position="75"/>
        <end position="94"/>
    </location>
</feature>
<feature type="coiled-coil region" evidence="1">
    <location>
        <begin position="25"/>
        <end position="67"/>
    </location>
</feature>
<feature type="compositionally biased region" description="Basic and acidic residues" evidence="3">
    <location>
        <begin position="1"/>
        <end position="10"/>
    </location>
</feature>
<feature type="compositionally biased region" description="Low complexity" evidence="3">
    <location>
        <begin position="17"/>
        <end position="34"/>
    </location>
</feature>
<feature type="binding site" evidence="2">
    <location>
        <begin position="879"/>
        <end position="886"/>
    </location>
    <ligand>
        <name>ATP</name>
        <dbReference type="ChEBI" id="CHEBI:30616"/>
    </ligand>
</feature>
<feature type="sequence conflict" description="In Ref. 1; AAL91500." evidence="4" ref="1">
    <original>E</original>
    <variation>K</variation>
    <location>
        <position position="15"/>
    </location>
</feature>